<keyword id="KW-0007">Acetylation</keyword>
<keyword id="KW-0072">Autophagy</keyword>
<keyword id="KW-0130">Cell adhesion</keyword>
<keyword id="KW-1003">Cell membrane</keyword>
<keyword id="KW-0256">Endoplasmic reticulum</keyword>
<keyword id="KW-0445">Lipid transport</keyword>
<keyword id="KW-0472">Membrane</keyword>
<keyword id="KW-1185">Reference proteome</keyword>
<keyword id="KW-0812">Transmembrane</keyword>
<keyword id="KW-1133">Transmembrane helix</keyword>
<keyword id="KW-0813">Transport</keyword>
<keyword id="KW-0926">Vacuole</keyword>
<organism>
    <name type="scientific">Pongo abelii</name>
    <name type="common">Sumatran orangutan</name>
    <name type="synonym">Pongo pygmaeus abelii</name>
    <dbReference type="NCBI Taxonomy" id="9601"/>
    <lineage>
        <taxon>Eukaryota</taxon>
        <taxon>Metazoa</taxon>
        <taxon>Chordata</taxon>
        <taxon>Craniata</taxon>
        <taxon>Vertebrata</taxon>
        <taxon>Euteleostomi</taxon>
        <taxon>Mammalia</taxon>
        <taxon>Eutheria</taxon>
        <taxon>Euarchontoglires</taxon>
        <taxon>Primates</taxon>
        <taxon>Haplorrhini</taxon>
        <taxon>Catarrhini</taxon>
        <taxon>Hominidae</taxon>
        <taxon>Pongo</taxon>
    </lineage>
</organism>
<accession>Q5R9K4</accession>
<name>VMP1_PONAB</name>
<gene>
    <name evidence="2" type="primary">VMP1</name>
</gene>
<protein>
    <recommendedName>
        <fullName evidence="2">Vacuole membrane protein 1</fullName>
    </recommendedName>
</protein>
<comment type="function">
    <text evidence="1 2">Phospholipid scramblase involved in lipid homeostasis and membrane dynamics processes. Has phospholipid scramblase activity toward cholesterol and phosphatidylserine, as well as phosphatidylethanolamine and phosphatidylcholine. Required for autophagosome formation: participates in early stages of autophagosome biogenesis at the endoplasmic reticulum (ER) membrane by reequilibrating the leaflets of the ER as lipids are extracted by ATG2 (ATG2A or ATG2B) to mediate autophagosome assembly. Regulates ATP2A2 activity to control ER-isolation membrane contacts for autophagosome formation. In addition to autophagy, involved in other processes in which phospholipid scramblase activity is required. Modulates ER contacts with lipid droplets, mitochondria and endosomes. Plays an essential role in formation of cell junctions (By similarity). Upon stress such as bacterial and viral infection, promotes formation of cytoplasmic vacuoles followed by cell death. Involved in the cytoplasmic vacuolization of acinar cells during the early stage of acute pancreatitis (By similarity).</text>
</comment>
<comment type="catalytic activity">
    <reaction evidence="2">
        <text>a 1,2-diacyl-sn-glycero-3-phospho-L-serine(in) = a 1,2-diacyl-sn-glycero-3-phospho-L-serine(out)</text>
        <dbReference type="Rhea" id="RHEA:38663"/>
        <dbReference type="ChEBI" id="CHEBI:57262"/>
    </reaction>
</comment>
<comment type="catalytic activity">
    <reaction evidence="2">
        <text>cholesterol(in) = cholesterol(out)</text>
        <dbReference type="Rhea" id="RHEA:39747"/>
        <dbReference type="ChEBI" id="CHEBI:16113"/>
    </reaction>
</comment>
<comment type="catalytic activity">
    <reaction evidence="2">
        <text>a 1,2-diacyl-sn-glycero-3-phosphocholine(in) = a 1,2-diacyl-sn-glycero-3-phosphocholine(out)</text>
        <dbReference type="Rhea" id="RHEA:38571"/>
        <dbReference type="ChEBI" id="CHEBI:57643"/>
    </reaction>
</comment>
<comment type="catalytic activity">
    <reaction evidence="2">
        <text>a 1,2-diacyl-sn-glycero-3-phosphoethanolamine(in) = a 1,2-diacyl-sn-glycero-3-phosphoethanolamine(out)</text>
        <dbReference type="Rhea" id="RHEA:38895"/>
        <dbReference type="ChEBI" id="CHEBI:64612"/>
    </reaction>
</comment>
<comment type="subunit">
    <text evidence="1 2">Interacts with BECN1 (By similarity). Interacts with TJP1. Interacts with TP53INP2. Interacts with TMEM41B. Interacts with ATP2A2, PLN and SLN; competes with PLN and SLN to prevent them from forming an inhibitory complex with ATP2A2. Interacts with ATG2A (By similarity).</text>
</comment>
<comment type="subcellular location">
    <subcellularLocation>
        <location evidence="1">Endoplasmic reticulum-Golgi intermediate compartment membrane</location>
        <topology evidence="3">Multi-pass membrane protein</topology>
    </subcellularLocation>
    <subcellularLocation>
        <location evidence="2">Cell membrane</location>
        <topology evidence="3">Multi-pass membrane protein</topology>
    </subcellularLocation>
    <subcellularLocation>
        <location evidence="1">Vacuole membrane</location>
        <topology evidence="3">Multi-pass membrane protein</topology>
    </subcellularLocation>
    <subcellularLocation>
        <location evidence="2">Endoplasmic reticulum membrane</location>
        <topology evidence="3">Multi-pass membrane protein</topology>
    </subcellularLocation>
</comment>
<comment type="domain">
    <text evidence="2">The VTT domain was previously called the SNARE-assoc domain. As there is no evidence that this domain associates with SNARE proteins, it was renamed as VMP1, TMEM41, and TVP38 (VTT) domain.</text>
</comment>
<comment type="similarity">
    <text evidence="5">Belongs to the VMP1 family.</text>
</comment>
<reference key="1">
    <citation type="submission" date="2004-11" db="EMBL/GenBank/DDBJ databases">
        <authorList>
            <consortium name="The German cDNA consortium"/>
        </authorList>
    </citation>
    <scope>NUCLEOTIDE SEQUENCE [LARGE SCALE MRNA]</scope>
    <source>
        <tissue>Brain cortex</tissue>
    </source>
</reference>
<evidence type="ECO:0000250" key="1">
    <source>
        <dbReference type="UniProtKB" id="Q91ZQ0"/>
    </source>
</evidence>
<evidence type="ECO:0000250" key="2">
    <source>
        <dbReference type="UniProtKB" id="Q96GC9"/>
    </source>
</evidence>
<evidence type="ECO:0000255" key="3"/>
<evidence type="ECO:0000256" key="4">
    <source>
        <dbReference type="SAM" id="MobiDB-lite"/>
    </source>
</evidence>
<evidence type="ECO:0000305" key="5"/>
<dbReference type="EMBL" id="CR859383">
    <property type="protein sequence ID" value="CAH91556.1"/>
    <property type="molecule type" value="mRNA"/>
</dbReference>
<dbReference type="RefSeq" id="NP_001125914.1">
    <property type="nucleotide sequence ID" value="NM_001132442.2"/>
</dbReference>
<dbReference type="RefSeq" id="XP_009234744.1">
    <property type="nucleotide sequence ID" value="XM_009236469.4"/>
</dbReference>
<dbReference type="RefSeq" id="XP_009234745.1">
    <property type="nucleotide sequence ID" value="XM_009236470.1"/>
</dbReference>
<dbReference type="RefSeq" id="XP_054391155.1">
    <property type="nucleotide sequence ID" value="XM_054535180.2"/>
</dbReference>
<dbReference type="SMR" id="Q5R9K4"/>
<dbReference type="FunCoup" id="Q5R9K4">
    <property type="interactions" value="2128"/>
</dbReference>
<dbReference type="STRING" id="9601.ENSPPYP00000009889"/>
<dbReference type="Ensembl" id="ENSPPYT00000010283.3">
    <property type="protein sequence ID" value="ENSPPYP00000009889.2"/>
    <property type="gene ID" value="ENSPPYG00000008809.3"/>
</dbReference>
<dbReference type="GeneID" id="100172847"/>
<dbReference type="KEGG" id="pon:100172847"/>
<dbReference type="CTD" id="81671"/>
<dbReference type="eggNOG" id="KOG1109">
    <property type="taxonomic scope" value="Eukaryota"/>
</dbReference>
<dbReference type="GeneTree" id="ENSGT00390000007230"/>
<dbReference type="HOGENOM" id="CLU_033298_0_1_1"/>
<dbReference type="InParanoid" id="Q5R9K4"/>
<dbReference type="OMA" id="EEPYDKR"/>
<dbReference type="OrthoDB" id="2016540at2759"/>
<dbReference type="TreeFam" id="TF313699"/>
<dbReference type="Proteomes" id="UP000001595">
    <property type="component" value="Chromosome 17"/>
</dbReference>
<dbReference type="GO" id="GO:0000421">
    <property type="term" value="C:autophagosome membrane"/>
    <property type="evidence" value="ECO:0000250"/>
    <property type="project" value="UniProtKB"/>
</dbReference>
<dbReference type="GO" id="GO:0005783">
    <property type="term" value="C:endoplasmic reticulum"/>
    <property type="evidence" value="ECO:0000250"/>
    <property type="project" value="UniProtKB"/>
</dbReference>
<dbReference type="GO" id="GO:0005789">
    <property type="term" value="C:endoplasmic reticulum membrane"/>
    <property type="evidence" value="ECO:0000250"/>
    <property type="project" value="UniProtKB"/>
</dbReference>
<dbReference type="GO" id="GO:0033116">
    <property type="term" value="C:endoplasmic reticulum-Golgi intermediate compartment membrane"/>
    <property type="evidence" value="ECO:0007669"/>
    <property type="project" value="UniProtKB-SubCell"/>
</dbReference>
<dbReference type="GO" id="GO:0005730">
    <property type="term" value="C:nucleolus"/>
    <property type="evidence" value="ECO:0007669"/>
    <property type="project" value="Ensembl"/>
</dbReference>
<dbReference type="GO" id="GO:0000407">
    <property type="term" value="C:phagophore assembly site"/>
    <property type="evidence" value="ECO:0007669"/>
    <property type="project" value="Ensembl"/>
</dbReference>
<dbReference type="GO" id="GO:0005886">
    <property type="term" value="C:plasma membrane"/>
    <property type="evidence" value="ECO:0007669"/>
    <property type="project" value="UniProtKB-SubCell"/>
</dbReference>
<dbReference type="GO" id="GO:0017128">
    <property type="term" value="F:phospholipid scramblase activity"/>
    <property type="evidence" value="ECO:0000250"/>
    <property type="project" value="UniProtKB"/>
</dbReference>
<dbReference type="GO" id="GO:0000045">
    <property type="term" value="P:autophagosome assembly"/>
    <property type="evidence" value="ECO:0000250"/>
    <property type="project" value="UniProtKB"/>
</dbReference>
<dbReference type="GO" id="GO:0016240">
    <property type="term" value="P:autophagosome membrane docking"/>
    <property type="evidence" value="ECO:0000250"/>
    <property type="project" value="UniProtKB"/>
</dbReference>
<dbReference type="GO" id="GO:0006914">
    <property type="term" value="P:autophagy"/>
    <property type="evidence" value="ECO:0000250"/>
    <property type="project" value="UniProtKB"/>
</dbReference>
<dbReference type="GO" id="GO:0034329">
    <property type="term" value="P:cell junction assembly"/>
    <property type="evidence" value="ECO:0000250"/>
    <property type="project" value="UniProtKB"/>
</dbReference>
<dbReference type="GO" id="GO:0098609">
    <property type="term" value="P:cell-cell adhesion"/>
    <property type="evidence" value="ECO:0000250"/>
    <property type="project" value="UniProtKB"/>
</dbReference>
<dbReference type="GO" id="GO:0007566">
    <property type="term" value="P:embryo implantation"/>
    <property type="evidence" value="ECO:0007669"/>
    <property type="project" value="Ensembl"/>
</dbReference>
<dbReference type="GO" id="GO:0042953">
    <property type="term" value="P:lipoprotein transport"/>
    <property type="evidence" value="ECO:0000250"/>
    <property type="project" value="UniProtKB"/>
</dbReference>
<dbReference type="GO" id="GO:1990456">
    <property type="term" value="P:mitochondrion-endoplasmic reticulum membrane tethering"/>
    <property type="evidence" value="ECO:0000250"/>
    <property type="project" value="UniProtKB"/>
</dbReference>
<dbReference type="GO" id="GO:0140056">
    <property type="term" value="P:organelle localization by membrane tethering"/>
    <property type="evidence" value="ECO:0000250"/>
    <property type="project" value="UniProtKB"/>
</dbReference>
<dbReference type="GO" id="GO:1901896">
    <property type="term" value="P:positive regulation of ATPase-coupled calcium transmembrane transporter activity"/>
    <property type="evidence" value="ECO:0000250"/>
    <property type="project" value="UniProtKB"/>
</dbReference>
<sequence length="406" mass="46129">MAENGKNCDQRRVAMNKEQHNGNFTDPSSVNEKKRREREERQNIVLWRQPLITLQYFSLEILVILKEWTSKLWHRQSIVVSFLLLLAVLIATYYVEGAHQQYVQRIEKQFLLYAYWIGLGILSSVGLGTGLHTFLLYLGPHIASVTLAAYECNSVNFPEPPYPDQIICPDEGGTEGTISLWSIISKVRIEACMWGIGTAIGELPPYFMARAARLSGAEPDDEEYQEFEEMLEHAESAQDFASRAKLAVQKLVQKVGFFGILACASIPNPLFDLAGITCGHFLVPFWTFFGATLIGKAIIKMHIQKIFVIITFSKHIVEQMVAFIGAVPGIGPSLQKPFQEYLEAQRQKLHHKSEMGTPQGENWLSWMFEKLVVVMVCYFILSIINSMAQSYAKRIQQRLNSEEKTK</sequence>
<proteinExistence type="evidence at transcript level"/>
<feature type="initiator methionine" description="Removed" evidence="2">
    <location>
        <position position="1"/>
    </location>
</feature>
<feature type="chain" id="PRO_0000284548" description="Vacuole membrane protein 1">
    <location>
        <begin position="2"/>
        <end position="406"/>
    </location>
</feature>
<feature type="topological domain" description="Cytoplasmic" evidence="3">
    <location>
        <begin position="2"/>
        <end position="43"/>
    </location>
</feature>
<feature type="transmembrane region" description="Helical" evidence="3">
    <location>
        <begin position="44"/>
        <end position="64"/>
    </location>
</feature>
<feature type="topological domain" description="Extracellular" evidence="3">
    <location>
        <begin position="65"/>
        <end position="77"/>
    </location>
</feature>
<feature type="transmembrane region" description="Helical" evidence="3">
    <location>
        <begin position="78"/>
        <end position="98"/>
    </location>
</feature>
<feature type="topological domain" description="Cytoplasmic" evidence="3">
    <location>
        <begin position="99"/>
        <end position="109"/>
    </location>
</feature>
<feature type="transmembrane region" description="Helical" evidence="3">
    <location>
        <begin position="110"/>
        <end position="130"/>
    </location>
</feature>
<feature type="topological domain" description="Extracellular" evidence="3">
    <location>
        <begin position="131"/>
        <end position="250"/>
    </location>
</feature>
<feature type="transmembrane region" description="Helical" evidence="3">
    <location>
        <begin position="251"/>
        <end position="271"/>
    </location>
</feature>
<feature type="topological domain" description="Cytoplasmic" evidence="3">
    <location>
        <begin position="272"/>
        <end position="273"/>
    </location>
</feature>
<feature type="transmembrane region" description="Helical" evidence="3">
    <location>
        <begin position="274"/>
        <end position="294"/>
    </location>
</feature>
<feature type="topological domain" description="Extracellular" evidence="3">
    <location>
        <begin position="295"/>
        <end position="305"/>
    </location>
</feature>
<feature type="transmembrane region" description="Helical" evidence="3">
    <location>
        <begin position="306"/>
        <end position="326"/>
    </location>
</feature>
<feature type="topological domain" description="Cytoplasmic" evidence="3">
    <location>
        <begin position="327"/>
        <end position="363"/>
    </location>
</feature>
<feature type="transmembrane region" description="Helical" evidence="3">
    <location>
        <begin position="364"/>
        <end position="384"/>
    </location>
</feature>
<feature type="topological domain" description="Extracellular" evidence="3">
    <location>
        <begin position="385"/>
        <end position="406"/>
    </location>
</feature>
<feature type="region of interest" description="Disordered" evidence="4">
    <location>
        <begin position="1"/>
        <end position="36"/>
    </location>
</feature>
<feature type="region of interest" description="VTT domain" evidence="2">
    <location>
        <begin position="173"/>
        <end position="316"/>
    </location>
</feature>
<feature type="compositionally biased region" description="Basic and acidic residues" evidence="4">
    <location>
        <begin position="1"/>
        <end position="20"/>
    </location>
</feature>
<feature type="compositionally biased region" description="Polar residues" evidence="4">
    <location>
        <begin position="21"/>
        <end position="30"/>
    </location>
</feature>
<feature type="modified residue" description="N-acetylalanine" evidence="2">
    <location>
        <position position="2"/>
    </location>
</feature>